<gene>
    <name evidence="1" type="primary">aspS</name>
    <name type="ordered locus">Deide_11460</name>
</gene>
<reference key="1">
    <citation type="journal article" date="2009" name="PLoS Genet.">
        <title>Alliance of proteomics and genomics to unravel the specificities of Sahara bacterium Deinococcus deserti.</title>
        <authorList>
            <person name="de Groot A."/>
            <person name="Dulermo R."/>
            <person name="Ortet P."/>
            <person name="Blanchard L."/>
            <person name="Guerin P."/>
            <person name="Fernandez B."/>
            <person name="Vacherie B."/>
            <person name="Dossat C."/>
            <person name="Jolivet E."/>
            <person name="Siguier P."/>
            <person name="Chandler M."/>
            <person name="Barakat M."/>
            <person name="Dedieu A."/>
            <person name="Barbe V."/>
            <person name="Heulin T."/>
            <person name="Sommer S."/>
            <person name="Achouak W."/>
            <person name="Armengaud J."/>
        </authorList>
    </citation>
    <scope>NUCLEOTIDE SEQUENCE [LARGE SCALE GENOMIC DNA]</scope>
    <source>
        <strain>DSM 17065 / CIP 109153 / LMG 22923 / VCD115</strain>
    </source>
</reference>
<name>SYD_DEIDV</name>
<keyword id="KW-0030">Aminoacyl-tRNA synthetase</keyword>
<keyword id="KW-0067">ATP-binding</keyword>
<keyword id="KW-0963">Cytoplasm</keyword>
<keyword id="KW-0436">Ligase</keyword>
<keyword id="KW-0547">Nucleotide-binding</keyword>
<keyword id="KW-0648">Protein biosynthesis</keyword>
<keyword id="KW-1185">Reference proteome</keyword>
<evidence type="ECO:0000255" key="1">
    <source>
        <dbReference type="HAMAP-Rule" id="MF_00044"/>
    </source>
</evidence>
<organism>
    <name type="scientific">Deinococcus deserti (strain DSM 17065 / CIP 109153 / LMG 22923 / VCD115)</name>
    <dbReference type="NCBI Taxonomy" id="546414"/>
    <lineage>
        <taxon>Bacteria</taxon>
        <taxon>Thermotogati</taxon>
        <taxon>Deinococcota</taxon>
        <taxon>Deinococci</taxon>
        <taxon>Deinococcales</taxon>
        <taxon>Deinococcaceae</taxon>
        <taxon>Deinococcus</taxon>
    </lineage>
</organism>
<sequence>MKRTALIGQLSTTHLDQAVTLQGWVNRRRDLGGLIFLELRDRSGLVQVQVEPDSPAFAQADQLRAEYVAEVEGIYRARPENQRKGGAADYEVIASRVKVLNTAKTPPFELDKGESVAEDIRLKYRYLDLRRPEMQRHLLLRSRAMAAVTAFLDSSGFVQVETPMLTKSTPEGARDFLVPSRLNPGEFYALPQSPQLFKQLLMIAGYDRYYQFARCFRDEDLRADRQPDFTQLDMEMSFVEQDDVLELQEGLMAHVFKATLDVDLPRPFPRLSYFDAMDRYGSDKPDLRFESALVDVTDLFQGGEFKAFAAAQSVKVLAAAELTRKQIDELERVAKQNGAGGLAWLKRDGDSFTGGISKFVGSVAPQLIKRSGVQDGGTLLFAAGDWKKAVTALGAVRLAVRDLFDLTSSGPRFHVSWVTDFPQLEFDEDSGTWTYMHHPFTAPHPDDAELFGTLRQGEIRAQAYDLVLNGFEVGGGSVRIHDPAVQTKMFEAIGFTEAQAREKFGFFMDALEYGTPPHGGIAWGFDRLVMVMSGASSIREVIAFPKNNRGADLMAEAPSLVDDAQLAELGVGVLSPS</sequence>
<comment type="function">
    <text evidence="1">Catalyzes the attachment of L-aspartate to tRNA(Asp) in a two-step reaction: L-aspartate is first activated by ATP to form Asp-AMP and then transferred to the acceptor end of tRNA(Asp).</text>
</comment>
<comment type="catalytic activity">
    <reaction evidence="1">
        <text>tRNA(Asp) + L-aspartate + ATP = L-aspartyl-tRNA(Asp) + AMP + diphosphate</text>
        <dbReference type="Rhea" id="RHEA:19649"/>
        <dbReference type="Rhea" id="RHEA-COMP:9660"/>
        <dbReference type="Rhea" id="RHEA-COMP:9678"/>
        <dbReference type="ChEBI" id="CHEBI:29991"/>
        <dbReference type="ChEBI" id="CHEBI:30616"/>
        <dbReference type="ChEBI" id="CHEBI:33019"/>
        <dbReference type="ChEBI" id="CHEBI:78442"/>
        <dbReference type="ChEBI" id="CHEBI:78516"/>
        <dbReference type="ChEBI" id="CHEBI:456215"/>
        <dbReference type="EC" id="6.1.1.12"/>
    </reaction>
</comment>
<comment type="subunit">
    <text evidence="1">Homodimer.</text>
</comment>
<comment type="subcellular location">
    <subcellularLocation>
        <location evidence="1">Cytoplasm</location>
    </subcellularLocation>
</comment>
<comment type="similarity">
    <text evidence="1">Belongs to the class-II aminoacyl-tRNA synthetase family. Type 1 subfamily.</text>
</comment>
<protein>
    <recommendedName>
        <fullName evidence="1">Aspartate--tRNA ligase</fullName>
        <ecNumber evidence="1">6.1.1.12</ecNumber>
    </recommendedName>
    <alternativeName>
        <fullName evidence="1">Aspartyl-tRNA synthetase</fullName>
        <shortName evidence="1">AspRS</shortName>
    </alternativeName>
</protein>
<proteinExistence type="inferred from homology"/>
<accession>C1CV34</accession>
<dbReference type="EC" id="6.1.1.12" evidence="1"/>
<dbReference type="EMBL" id="CP001114">
    <property type="protein sequence ID" value="ACO46051.1"/>
    <property type="molecule type" value="Genomic_DNA"/>
</dbReference>
<dbReference type="RefSeq" id="WP_012693174.1">
    <property type="nucleotide sequence ID" value="NC_012526.1"/>
</dbReference>
<dbReference type="SMR" id="C1CV34"/>
<dbReference type="STRING" id="546414.Deide_11460"/>
<dbReference type="PaxDb" id="546414-Deide_11460"/>
<dbReference type="KEGG" id="ddr:Deide_11460"/>
<dbReference type="eggNOG" id="COG0173">
    <property type="taxonomic scope" value="Bacteria"/>
</dbReference>
<dbReference type="HOGENOM" id="CLU_014330_3_2_0"/>
<dbReference type="OrthoDB" id="9802326at2"/>
<dbReference type="Proteomes" id="UP000002208">
    <property type="component" value="Chromosome"/>
</dbReference>
<dbReference type="GO" id="GO:0005737">
    <property type="term" value="C:cytoplasm"/>
    <property type="evidence" value="ECO:0007669"/>
    <property type="project" value="UniProtKB-SubCell"/>
</dbReference>
<dbReference type="GO" id="GO:0004815">
    <property type="term" value="F:aspartate-tRNA ligase activity"/>
    <property type="evidence" value="ECO:0007669"/>
    <property type="project" value="UniProtKB-UniRule"/>
</dbReference>
<dbReference type="GO" id="GO:0005524">
    <property type="term" value="F:ATP binding"/>
    <property type="evidence" value="ECO:0007669"/>
    <property type="project" value="UniProtKB-UniRule"/>
</dbReference>
<dbReference type="GO" id="GO:0003676">
    <property type="term" value="F:nucleic acid binding"/>
    <property type="evidence" value="ECO:0007669"/>
    <property type="project" value="InterPro"/>
</dbReference>
<dbReference type="GO" id="GO:0006422">
    <property type="term" value="P:aspartyl-tRNA aminoacylation"/>
    <property type="evidence" value="ECO:0007669"/>
    <property type="project" value="UniProtKB-UniRule"/>
</dbReference>
<dbReference type="CDD" id="cd00777">
    <property type="entry name" value="AspRS_core"/>
    <property type="match status" value="1"/>
</dbReference>
<dbReference type="CDD" id="cd04317">
    <property type="entry name" value="EcAspRS_like_N"/>
    <property type="match status" value="1"/>
</dbReference>
<dbReference type="Gene3D" id="3.30.930.10">
    <property type="entry name" value="Bira Bifunctional Protein, Domain 2"/>
    <property type="match status" value="1"/>
</dbReference>
<dbReference type="Gene3D" id="3.30.1360.30">
    <property type="entry name" value="GAD-like domain"/>
    <property type="match status" value="1"/>
</dbReference>
<dbReference type="Gene3D" id="2.40.50.140">
    <property type="entry name" value="Nucleic acid-binding proteins"/>
    <property type="match status" value="1"/>
</dbReference>
<dbReference type="HAMAP" id="MF_00044">
    <property type="entry name" value="Asp_tRNA_synth_type1"/>
    <property type="match status" value="1"/>
</dbReference>
<dbReference type="InterPro" id="IPR004364">
    <property type="entry name" value="Aa-tRNA-synt_II"/>
</dbReference>
<dbReference type="InterPro" id="IPR006195">
    <property type="entry name" value="aa-tRNA-synth_II"/>
</dbReference>
<dbReference type="InterPro" id="IPR045864">
    <property type="entry name" value="aa-tRNA-synth_II/BPL/LPL"/>
</dbReference>
<dbReference type="InterPro" id="IPR004524">
    <property type="entry name" value="Asp-tRNA-ligase_1"/>
</dbReference>
<dbReference type="InterPro" id="IPR047089">
    <property type="entry name" value="Asp-tRNA-ligase_1_N"/>
</dbReference>
<dbReference type="InterPro" id="IPR002312">
    <property type="entry name" value="Asp/Asn-tRNA-synth_IIb"/>
</dbReference>
<dbReference type="InterPro" id="IPR047090">
    <property type="entry name" value="AspRS_core"/>
</dbReference>
<dbReference type="InterPro" id="IPR004115">
    <property type="entry name" value="GAD-like_sf"/>
</dbReference>
<dbReference type="InterPro" id="IPR029351">
    <property type="entry name" value="GAD_dom"/>
</dbReference>
<dbReference type="InterPro" id="IPR012340">
    <property type="entry name" value="NA-bd_OB-fold"/>
</dbReference>
<dbReference type="InterPro" id="IPR004365">
    <property type="entry name" value="NA-bd_OB_tRNA"/>
</dbReference>
<dbReference type="NCBIfam" id="TIGR00459">
    <property type="entry name" value="aspS_bact"/>
    <property type="match status" value="1"/>
</dbReference>
<dbReference type="NCBIfam" id="NF001750">
    <property type="entry name" value="PRK00476.1"/>
    <property type="match status" value="1"/>
</dbReference>
<dbReference type="PANTHER" id="PTHR22594:SF5">
    <property type="entry name" value="ASPARTATE--TRNA LIGASE, MITOCHONDRIAL"/>
    <property type="match status" value="1"/>
</dbReference>
<dbReference type="PANTHER" id="PTHR22594">
    <property type="entry name" value="ASPARTYL/LYSYL-TRNA SYNTHETASE"/>
    <property type="match status" value="1"/>
</dbReference>
<dbReference type="Pfam" id="PF02938">
    <property type="entry name" value="GAD"/>
    <property type="match status" value="1"/>
</dbReference>
<dbReference type="Pfam" id="PF00152">
    <property type="entry name" value="tRNA-synt_2"/>
    <property type="match status" value="1"/>
</dbReference>
<dbReference type="Pfam" id="PF01336">
    <property type="entry name" value="tRNA_anti-codon"/>
    <property type="match status" value="1"/>
</dbReference>
<dbReference type="PRINTS" id="PR01042">
    <property type="entry name" value="TRNASYNTHASP"/>
</dbReference>
<dbReference type="SUPFAM" id="SSF55681">
    <property type="entry name" value="Class II aaRS and biotin synthetases"/>
    <property type="match status" value="1"/>
</dbReference>
<dbReference type="SUPFAM" id="SSF55261">
    <property type="entry name" value="GAD domain-like"/>
    <property type="match status" value="1"/>
</dbReference>
<dbReference type="SUPFAM" id="SSF50249">
    <property type="entry name" value="Nucleic acid-binding proteins"/>
    <property type="match status" value="1"/>
</dbReference>
<dbReference type="PROSITE" id="PS50862">
    <property type="entry name" value="AA_TRNA_LIGASE_II"/>
    <property type="match status" value="1"/>
</dbReference>
<feature type="chain" id="PRO_1000202153" description="Aspartate--tRNA ligase">
    <location>
        <begin position="1"/>
        <end position="577"/>
    </location>
</feature>
<feature type="region of interest" description="Aspartate" evidence="1">
    <location>
        <begin position="195"/>
        <end position="198"/>
    </location>
</feature>
<feature type="binding site" evidence="1">
    <location>
        <position position="171"/>
    </location>
    <ligand>
        <name>L-aspartate</name>
        <dbReference type="ChEBI" id="CHEBI:29991"/>
    </ligand>
</feature>
<feature type="binding site" evidence="1">
    <location>
        <begin position="217"/>
        <end position="219"/>
    </location>
    <ligand>
        <name>ATP</name>
        <dbReference type="ChEBI" id="CHEBI:30616"/>
    </ligand>
</feature>
<feature type="binding site" evidence="1">
    <location>
        <position position="217"/>
    </location>
    <ligand>
        <name>L-aspartate</name>
        <dbReference type="ChEBI" id="CHEBI:29991"/>
    </ligand>
</feature>
<feature type="binding site" evidence="1">
    <location>
        <position position="226"/>
    </location>
    <ligand>
        <name>ATP</name>
        <dbReference type="ChEBI" id="CHEBI:30616"/>
    </ligand>
</feature>
<feature type="binding site" evidence="1">
    <location>
        <position position="437"/>
    </location>
    <ligand>
        <name>L-aspartate</name>
        <dbReference type="ChEBI" id="CHEBI:29991"/>
    </ligand>
</feature>
<feature type="binding site" evidence="1">
    <location>
        <position position="472"/>
    </location>
    <ligand>
        <name>ATP</name>
        <dbReference type="ChEBI" id="CHEBI:30616"/>
    </ligand>
</feature>
<feature type="binding site" evidence="1">
    <location>
        <position position="479"/>
    </location>
    <ligand>
        <name>L-aspartate</name>
        <dbReference type="ChEBI" id="CHEBI:29991"/>
    </ligand>
</feature>
<feature type="binding site" evidence="1">
    <location>
        <begin position="524"/>
        <end position="527"/>
    </location>
    <ligand>
        <name>ATP</name>
        <dbReference type="ChEBI" id="CHEBI:30616"/>
    </ligand>
</feature>